<accession>Q04VR0</accession>
<name>ISPD_LEPBJ</name>
<proteinExistence type="inferred from homology"/>
<sequence>MKSLFLSEKIYVLILAGGTGTRMGSEIPKQFLEFSNEPILIHTLKKFQSWKKQKQIVLVSHPEFISETESICSPFLENQDCIIEGGETRHGSMLRGLSALTIQSEDILLIHDAARPFVLLKELDLLCENIRENGISTLASRTSETVLEESNGKTSSFLDREHIWFMKTPQGIRGDILKELLTLPMDPIPTDLCSWALTAGKKSSIVESHPFNLKITRKEDLELAEFYSDLFEKLR</sequence>
<reference key="1">
    <citation type="journal article" date="2006" name="Proc. Natl. Acad. Sci. U.S.A.">
        <title>Genome reduction in Leptospira borgpetersenii reflects limited transmission potential.</title>
        <authorList>
            <person name="Bulach D.M."/>
            <person name="Zuerner R.L."/>
            <person name="Wilson P."/>
            <person name="Seemann T."/>
            <person name="McGrath A."/>
            <person name="Cullen P.A."/>
            <person name="Davis J."/>
            <person name="Johnson M."/>
            <person name="Kuczek E."/>
            <person name="Alt D.P."/>
            <person name="Peterson-Burch B."/>
            <person name="Coppel R.L."/>
            <person name="Rood J.I."/>
            <person name="Davies J.K."/>
            <person name="Adler B."/>
        </authorList>
    </citation>
    <scope>NUCLEOTIDE SEQUENCE [LARGE SCALE GENOMIC DNA]</scope>
    <source>
        <strain>JB197</strain>
    </source>
</reference>
<feature type="chain" id="PRO_1000191061" description="2-C-methyl-D-erythritol 4-phosphate cytidylyltransferase">
    <location>
        <begin position="1"/>
        <end position="235"/>
    </location>
</feature>
<feature type="site" description="Transition state stabilizer" evidence="1">
    <location>
        <position position="22"/>
    </location>
</feature>
<feature type="site" description="Transition state stabilizer" evidence="1">
    <location>
        <position position="29"/>
    </location>
</feature>
<feature type="site" description="Positions MEP for the nucleophilic attack" evidence="1">
    <location>
        <position position="160"/>
    </location>
</feature>
<feature type="site" description="Positions MEP for the nucleophilic attack" evidence="1">
    <location>
        <position position="214"/>
    </location>
</feature>
<keyword id="KW-0414">Isoprene biosynthesis</keyword>
<keyword id="KW-0548">Nucleotidyltransferase</keyword>
<keyword id="KW-0808">Transferase</keyword>
<gene>
    <name evidence="1" type="primary">ispD</name>
    <name type="ordered locus">LBJ_0280</name>
</gene>
<protein>
    <recommendedName>
        <fullName evidence="1">2-C-methyl-D-erythritol 4-phosphate cytidylyltransferase</fullName>
        <ecNumber evidence="1">2.7.7.60</ecNumber>
    </recommendedName>
    <alternativeName>
        <fullName evidence="1">4-diphosphocytidyl-2C-methyl-D-erythritol synthase</fullName>
    </alternativeName>
    <alternativeName>
        <fullName evidence="1">MEP cytidylyltransferase</fullName>
        <shortName evidence="1">MCT</shortName>
    </alternativeName>
</protein>
<dbReference type="EC" id="2.7.7.60" evidence="1"/>
<dbReference type="EMBL" id="CP000350">
    <property type="protein sequence ID" value="ABJ75010.1"/>
    <property type="molecule type" value="Genomic_DNA"/>
</dbReference>
<dbReference type="RefSeq" id="WP_002723910.1">
    <property type="nucleotide sequence ID" value="NC_008510.1"/>
</dbReference>
<dbReference type="SMR" id="Q04VR0"/>
<dbReference type="KEGG" id="lbj:LBJ_0280"/>
<dbReference type="HOGENOM" id="CLU_061281_2_2_12"/>
<dbReference type="UniPathway" id="UPA00056">
    <property type="reaction ID" value="UER00093"/>
</dbReference>
<dbReference type="Proteomes" id="UP000000656">
    <property type="component" value="Chromosome 1"/>
</dbReference>
<dbReference type="GO" id="GO:0005829">
    <property type="term" value="C:cytosol"/>
    <property type="evidence" value="ECO:0007669"/>
    <property type="project" value="TreeGrafter"/>
</dbReference>
<dbReference type="GO" id="GO:0050518">
    <property type="term" value="F:2-C-methyl-D-erythritol 4-phosphate cytidylyltransferase activity"/>
    <property type="evidence" value="ECO:0007669"/>
    <property type="project" value="UniProtKB-UniRule"/>
</dbReference>
<dbReference type="GO" id="GO:0019288">
    <property type="term" value="P:isopentenyl diphosphate biosynthetic process, methylerythritol 4-phosphate pathway"/>
    <property type="evidence" value="ECO:0007669"/>
    <property type="project" value="UniProtKB-UniRule"/>
</dbReference>
<dbReference type="CDD" id="cd02516">
    <property type="entry name" value="CDP-ME_synthetase"/>
    <property type="match status" value="1"/>
</dbReference>
<dbReference type="Gene3D" id="3.90.550.10">
    <property type="entry name" value="Spore Coat Polysaccharide Biosynthesis Protein SpsA, Chain A"/>
    <property type="match status" value="1"/>
</dbReference>
<dbReference type="HAMAP" id="MF_00108">
    <property type="entry name" value="IspD"/>
    <property type="match status" value="1"/>
</dbReference>
<dbReference type="InterPro" id="IPR001228">
    <property type="entry name" value="IspD"/>
</dbReference>
<dbReference type="InterPro" id="IPR034683">
    <property type="entry name" value="IspD/TarI"/>
</dbReference>
<dbReference type="InterPro" id="IPR029044">
    <property type="entry name" value="Nucleotide-diphossugar_trans"/>
</dbReference>
<dbReference type="PANTHER" id="PTHR43015">
    <property type="entry name" value="D-RIBITOL-5-PHOSPHATE CYTIDYLYLTRANSFERASE"/>
    <property type="match status" value="1"/>
</dbReference>
<dbReference type="PANTHER" id="PTHR43015:SF1">
    <property type="entry name" value="D-RIBITOL-5-PHOSPHATE CYTIDYLYLTRANSFERASE"/>
    <property type="match status" value="1"/>
</dbReference>
<dbReference type="Pfam" id="PF01128">
    <property type="entry name" value="IspD"/>
    <property type="match status" value="1"/>
</dbReference>
<dbReference type="SUPFAM" id="SSF53448">
    <property type="entry name" value="Nucleotide-diphospho-sugar transferases"/>
    <property type="match status" value="1"/>
</dbReference>
<comment type="function">
    <text evidence="1">Catalyzes the formation of 4-diphosphocytidyl-2-C-methyl-D-erythritol from CTP and 2-C-methyl-D-erythritol 4-phosphate (MEP).</text>
</comment>
<comment type="catalytic activity">
    <reaction evidence="1">
        <text>2-C-methyl-D-erythritol 4-phosphate + CTP + H(+) = 4-CDP-2-C-methyl-D-erythritol + diphosphate</text>
        <dbReference type="Rhea" id="RHEA:13429"/>
        <dbReference type="ChEBI" id="CHEBI:15378"/>
        <dbReference type="ChEBI" id="CHEBI:33019"/>
        <dbReference type="ChEBI" id="CHEBI:37563"/>
        <dbReference type="ChEBI" id="CHEBI:57823"/>
        <dbReference type="ChEBI" id="CHEBI:58262"/>
        <dbReference type="EC" id="2.7.7.60"/>
    </reaction>
</comment>
<comment type="pathway">
    <text evidence="1">Isoprenoid biosynthesis; isopentenyl diphosphate biosynthesis via DXP pathway; isopentenyl diphosphate from 1-deoxy-D-xylulose 5-phosphate: step 2/6.</text>
</comment>
<comment type="similarity">
    <text evidence="1">Belongs to the IspD/TarI cytidylyltransferase family. IspD subfamily.</text>
</comment>
<evidence type="ECO:0000255" key="1">
    <source>
        <dbReference type="HAMAP-Rule" id="MF_00108"/>
    </source>
</evidence>
<organism>
    <name type="scientific">Leptospira borgpetersenii serovar Hardjo-bovis (strain JB197)</name>
    <dbReference type="NCBI Taxonomy" id="355277"/>
    <lineage>
        <taxon>Bacteria</taxon>
        <taxon>Pseudomonadati</taxon>
        <taxon>Spirochaetota</taxon>
        <taxon>Spirochaetia</taxon>
        <taxon>Leptospirales</taxon>
        <taxon>Leptospiraceae</taxon>
        <taxon>Leptospira</taxon>
    </lineage>
</organism>